<organism>
    <name type="scientific">Escherichia coli O9:H4 (strain HS)</name>
    <dbReference type="NCBI Taxonomy" id="331112"/>
    <lineage>
        <taxon>Bacteria</taxon>
        <taxon>Pseudomonadati</taxon>
        <taxon>Pseudomonadota</taxon>
        <taxon>Gammaproteobacteria</taxon>
        <taxon>Enterobacterales</taxon>
        <taxon>Enterobacteriaceae</taxon>
        <taxon>Escherichia</taxon>
    </lineage>
</organism>
<name>RTCA_ECOHS</name>
<reference key="1">
    <citation type="journal article" date="2008" name="J. Bacteriol.">
        <title>The pangenome structure of Escherichia coli: comparative genomic analysis of E. coli commensal and pathogenic isolates.</title>
        <authorList>
            <person name="Rasko D.A."/>
            <person name="Rosovitz M.J."/>
            <person name="Myers G.S.A."/>
            <person name="Mongodin E.F."/>
            <person name="Fricke W.F."/>
            <person name="Gajer P."/>
            <person name="Crabtree J."/>
            <person name="Sebaihia M."/>
            <person name="Thomson N.R."/>
            <person name="Chaudhuri R."/>
            <person name="Henderson I.R."/>
            <person name="Sperandio V."/>
            <person name="Ravel J."/>
        </authorList>
    </citation>
    <scope>NUCLEOTIDE SEQUENCE [LARGE SCALE GENOMIC DNA]</scope>
    <source>
        <strain>HS</strain>
    </source>
</reference>
<protein>
    <recommendedName>
        <fullName evidence="1">RNA 3'-terminal phosphate cyclase</fullName>
        <shortName evidence="1">RNA cyclase</shortName>
        <shortName evidence="1">RNA-3'-phosphate cyclase</shortName>
        <ecNumber evidence="1">6.5.1.4</ecNumber>
    </recommendedName>
</protein>
<dbReference type="EC" id="6.5.1.4" evidence="1"/>
<dbReference type="EMBL" id="CP000802">
    <property type="protein sequence ID" value="ABV07832.1"/>
    <property type="molecule type" value="Genomic_DNA"/>
</dbReference>
<dbReference type="RefSeq" id="WP_001300557.1">
    <property type="nucleotide sequence ID" value="NC_009800.1"/>
</dbReference>
<dbReference type="SMR" id="A8A5M8"/>
<dbReference type="KEGG" id="ecx:EcHS_A3617"/>
<dbReference type="HOGENOM" id="CLU_027882_0_0_6"/>
<dbReference type="GO" id="GO:0005737">
    <property type="term" value="C:cytoplasm"/>
    <property type="evidence" value="ECO:0007669"/>
    <property type="project" value="UniProtKB-SubCell"/>
</dbReference>
<dbReference type="GO" id="GO:0005524">
    <property type="term" value="F:ATP binding"/>
    <property type="evidence" value="ECO:0007669"/>
    <property type="project" value="UniProtKB-KW"/>
</dbReference>
<dbReference type="GO" id="GO:0003963">
    <property type="term" value="F:RNA-3'-phosphate cyclase activity"/>
    <property type="evidence" value="ECO:0007669"/>
    <property type="project" value="UniProtKB-UniRule"/>
</dbReference>
<dbReference type="GO" id="GO:0006396">
    <property type="term" value="P:RNA processing"/>
    <property type="evidence" value="ECO:0007669"/>
    <property type="project" value="InterPro"/>
</dbReference>
<dbReference type="FunFam" id="3.65.10.20:FF:000002">
    <property type="entry name" value="GM19193"/>
    <property type="match status" value="1"/>
</dbReference>
<dbReference type="FunFam" id="3.30.360.20:FF:000003">
    <property type="entry name" value="RNA 3'-terminal phosphate cyclase"/>
    <property type="match status" value="1"/>
</dbReference>
<dbReference type="Gene3D" id="3.65.10.20">
    <property type="entry name" value="RNA 3'-terminal phosphate cyclase domain"/>
    <property type="match status" value="1"/>
</dbReference>
<dbReference type="Gene3D" id="3.30.360.20">
    <property type="entry name" value="RNA 3'-terminal phosphate cyclase, insert domain"/>
    <property type="match status" value="1"/>
</dbReference>
<dbReference type="HAMAP" id="MF_00200">
    <property type="entry name" value="RTC"/>
    <property type="match status" value="1"/>
</dbReference>
<dbReference type="InterPro" id="IPR013791">
    <property type="entry name" value="RNA3'-term_phos_cycl_insert"/>
</dbReference>
<dbReference type="InterPro" id="IPR023797">
    <property type="entry name" value="RNA3'_phos_cyclase_dom"/>
</dbReference>
<dbReference type="InterPro" id="IPR037136">
    <property type="entry name" value="RNA3'_phos_cyclase_dom_sf"/>
</dbReference>
<dbReference type="InterPro" id="IPR000228">
    <property type="entry name" value="RNA3'_term_phos_cyc"/>
</dbReference>
<dbReference type="InterPro" id="IPR017770">
    <property type="entry name" value="RNA3'_term_phos_cyc_type_1"/>
</dbReference>
<dbReference type="InterPro" id="IPR020719">
    <property type="entry name" value="RNA3'_term_phos_cycl-like_CS"/>
</dbReference>
<dbReference type="InterPro" id="IPR013792">
    <property type="entry name" value="RNA3'P_cycl/enolpyr_Trfase_a/b"/>
</dbReference>
<dbReference type="InterPro" id="IPR036553">
    <property type="entry name" value="RPTC_insert"/>
</dbReference>
<dbReference type="NCBIfam" id="NF003246">
    <property type="entry name" value="PRK04204.1-2"/>
    <property type="match status" value="1"/>
</dbReference>
<dbReference type="NCBIfam" id="NF003247">
    <property type="entry name" value="PRK04204.1-3"/>
    <property type="match status" value="1"/>
</dbReference>
<dbReference type="NCBIfam" id="TIGR03399">
    <property type="entry name" value="RNA_3prim_cycl"/>
    <property type="match status" value="1"/>
</dbReference>
<dbReference type="PANTHER" id="PTHR11096">
    <property type="entry name" value="RNA 3' TERMINAL PHOSPHATE CYCLASE"/>
    <property type="match status" value="1"/>
</dbReference>
<dbReference type="PANTHER" id="PTHR11096:SF0">
    <property type="entry name" value="RNA 3'-TERMINAL PHOSPHATE CYCLASE"/>
    <property type="match status" value="1"/>
</dbReference>
<dbReference type="Pfam" id="PF01137">
    <property type="entry name" value="RTC"/>
    <property type="match status" value="1"/>
</dbReference>
<dbReference type="Pfam" id="PF05189">
    <property type="entry name" value="RTC_insert"/>
    <property type="match status" value="1"/>
</dbReference>
<dbReference type="PIRSF" id="PIRSF005378">
    <property type="entry name" value="RNA3'_term_phos_cycl_euk"/>
    <property type="match status" value="1"/>
</dbReference>
<dbReference type="SUPFAM" id="SSF55205">
    <property type="entry name" value="EPT/RTPC-like"/>
    <property type="match status" value="2"/>
</dbReference>
<dbReference type="SUPFAM" id="SSF52913">
    <property type="entry name" value="RNA 3'-terminal phosphate cyclase, RPTC, insert domain"/>
    <property type="match status" value="1"/>
</dbReference>
<dbReference type="PROSITE" id="PS01287">
    <property type="entry name" value="RTC"/>
    <property type="match status" value="1"/>
</dbReference>
<feature type="chain" id="PRO_1000058562" description="RNA 3'-terminal phosphate cyclase">
    <location>
        <begin position="1"/>
        <end position="338"/>
    </location>
</feature>
<feature type="active site" description="Tele-AMP-histidine intermediate" evidence="1">
    <location>
        <position position="308"/>
    </location>
</feature>
<feature type="binding site" evidence="1">
    <location>
        <position position="103"/>
    </location>
    <ligand>
        <name>ATP</name>
        <dbReference type="ChEBI" id="CHEBI:30616"/>
    </ligand>
</feature>
<feature type="binding site" evidence="1">
    <location>
        <begin position="283"/>
        <end position="287"/>
    </location>
    <ligand>
        <name>ATP</name>
        <dbReference type="ChEBI" id="CHEBI:30616"/>
    </ligand>
</feature>
<comment type="function">
    <text evidence="1">Catalyzes the conversion of 3'-phosphate to a 2',3'-cyclic phosphodiester at the end of RNA. The mechanism of action of the enzyme occurs in 3 steps: (A) adenylation of the enzyme by ATP; (B) transfer of adenylate to an RNA-N3'P to produce RNA-N3'PP5'A; (C) and attack of the adjacent 2'-hydroxyl on the 3'-phosphorus in the diester linkage to produce the cyclic end product. The biological role of this enzyme is unknown but it is likely to function in some aspects of cellular RNA processing.</text>
</comment>
<comment type="catalytic activity">
    <reaction evidence="1">
        <text>a 3'-end 3'-phospho-ribonucleotide-RNA + ATP = a 3'-end 2',3'-cyclophospho-ribonucleotide-RNA + AMP + diphosphate</text>
        <dbReference type="Rhea" id="RHEA:23976"/>
        <dbReference type="Rhea" id="RHEA-COMP:10463"/>
        <dbReference type="Rhea" id="RHEA-COMP:10464"/>
        <dbReference type="ChEBI" id="CHEBI:30616"/>
        <dbReference type="ChEBI" id="CHEBI:33019"/>
        <dbReference type="ChEBI" id="CHEBI:83062"/>
        <dbReference type="ChEBI" id="CHEBI:83064"/>
        <dbReference type="ChEBI" id="CHEBI:456215"/>
        <dbReference type="EC" id="6.5.1.4"/>
    </reaction>
</comment>
<comment type="subcellular location">
    <subcellularLocation>
        <location evidence="1">Cytoplasm</location>
    </subcellularLocation>
</comment>
<comment type="similarity">
    <text evidence="1">Belongs to the RNA 3'-terminal cyclase family. Type 1 subfamily.</text>
</comment>
<proteinExistence type="inferred from homology"/>
<accession>A8A5M8</accession>
<sequence>MKRMIALDGAQGEGGGQILRSALSLSMITGQPFTITGIRAGRAKPGLLRQHLTAVKAAAEICRATVEGAELGSQRLLFRPGTVRGGDYRFAIGSAGSCTLVLQTVLPALWFADGPSRVEVSGGTDNPSAPPADFIRRVLEPLLAKMGIHQQTTLLRHGFYPAGGGVVATEVSPVASFNTLQLGERGNIVQMRGEVLLAGVPRHVAEREIATLAGSFSLHEQNIHNLPRDQGPGNTVSLEVESENITERFFVVGEKRVSAEVVAAQLVKEVKRYLASTAAVGEYLADQLVLPMALAGAGEFTVAHPSCHLLTNIAVVERFLPVRFSLIETDGVTRVSIE</sequence>
<evidence type="ECO:0000255" key="1">
    <source>
        <dbReference type="HAMAP-Rule" id="MF_00200"/>
    </source>
</evidence>
<keyword id="KW-0067">ATP-binding</keyword>
<keyword id="KW-0963">Cytoplasm</keyword>
<keyword id="KW-0436">Ligase</keyword>
<keyword id="KW-0547">Nucleotide-binding</keyword>
<gene>
    <name evidence="1" type="primary">rtcA</name>
    <name type="ordered locus">EcHS_A3617</name>
</gene>